<name>B3GN5_XENTR</name>
<accession>Q6P3P5</accession>
<accession>Q07G20</accession>
<sequence length="377" mass="43330">MLISARRLRRCQFFQLLTSCFVLSLMALLVQEDNSLINHVKSYSYRYLINSYDFVNDSLSVPRDRPDGAPSYRYLINNRDKCQNEDVLLLLFVKTSPENRRRRNAIRKTWGNEDYIRSQYAANIKVVFALGIEADPVKSHQTQKDLVIENKRFNDLIQQDFKDTFHNLTLKLLLQFGWVNSYCPSAKFIMSADDDIFVHTPNLVSYLKSLPIETQDFWIGRVHRGSPPIRSKTSKYYVPYEMYPWSSYPDYTAGAAYVVSKDVAAKVYEASQTLNTSLYIDDVFMGICANKMGVVPQYHVYFAGEGKAPYHPCIYNKMITSHGHLDDLDYLWRQATDPNVKSLSAGVLGGAYCKLVNIMLLCKLSYVDTYPCSAAWS</sequence>
<comment type="function">
    <text evidence="3">Beta-1,3-N-acetylglucosaminyltransferase that plays a key role in the synthesis of lacto- or neolacto-series carbohydrate chains on glycolipids.</text>
</comment>
<comment type="catalytic activity">
    <reaction evidence="3">
        <text>a beta-D-Gal-(1-&gt;4)-beta-D-Glc-(1&lt;-&gt;1)-Cer(d18:1(4E)) + UDP-N-acetyl-alpha-D-glucosamine = a beta-D-GlcNAc-(1-&gt;3)-beta-D-Gal-(1-&gt;4)-beta-D-Glc-(1&lt;-&gt;1)-Cer(d18:1(4E)) + UDP + H(+)</text>
        <dbReference type="Rhea" id="RHEA:13905"/>
        <dbReference type="ChEBI" id="CHEBI:15378"/>
        <dbReference type="ChEBI" id="CHEBI:17103"/>
        <dbReference type="ChEBI" id="CHEBI:17950"/>
        <dbReference type="ChEBI" id="CHEBI:57705"/>
        <dbReference type="ChEBI" id="CHEBI:58223"/>
        <dbReference type="EC" id="2.4.1.206"/>
    </reaction>
    <physiologicalReaction direction="left-to-right" evidence="3">
        <dbReference type="Rhea" id="RHEA:13906"/>
    </physiologicalReaction>
</comment>
<comment type="catalytic activity">
    <reaction evidence="3">
        <text>a neolactoside nLc4Cer(d18:1(4E)) + UDP-N-acetyl-alpha-D-glucosamine = a neolactoside IV(3)-beta-GlcNAc-nLc4Cer(d18:1(4E)) + UDP + H(+)</text>
        <dbReference type="Rhea" id="RHEA:23004"/>
        <dbReference type="ChEBI" id="CHEBI:15378"/>
        <dbReference type="ChEBI" id="CHEBI:17006"/>
        <dbReference type="ChEBI" id="CHEBI:57705"/>
        <dbReference type="ChEBI" id="CHEBI:58223"/>
        <dbReference type="ChEBI" id="CHEBI:142448"/>
    </reaction>
    <physiologicalReaction direction="left-to-right" evidence="3">
        <dbReference type="Rhea" id="RHEA:23005"/>
    </physiologicalReaction>
</comment>
<comment type="pathway">
    <text>Protein modification; protein glycosylation.</text>
</comment>
<comment type="subcellular location">
    <subcellularLocation>
        <location evidence="1">Golgi apparatus membrane</location>
        <topology evidence="1">Single-pass type II membrane protein</topology>
    </subcellularLocation>
</comment>
<comment type="similarity">
    <text evidence="5">Belongs to the glycosyltransferase 31 family.</text>
</comment>
<comment type="sequence caution" evidence="5">
    <conflict type="erroneous initiation">
        <sequence resource="EMBL-CDS" id="CAL49301"/>
    </conflict>
    <text>Truncated N-terminus.</text>
</comment>
<gene>
    <name type="primary">b3gnt5</name>
    <name type="ORF">TEgg092f15.1</name>
</gene>
<keyword id="KW-0325">Glycoprotein</keyword>
<keyword id="KW-0328">Glycosyltransferase</keyword>
<keyword id="KW-0333">Golgi apparatus</keyword>
<keyword id="KW-0443">Lipid metabolism</keyword>
<keyword id="KW-0472">Membrane</keyword>
<keyword id="KW-1185">Reference proteome</keyword>
<keyword id="KW-0735">Signal-anchor</keyword>
<keyword id="KW-0808">Transferase</keyword>
<keyword id="KW-0812">Transmembrane</keyword>
<keyword id="KW-1133">Transmembrane helix</keyword>
<protein>
    <recommendedName>
        <fullName>Lactosylceramide 1,3-N-acetyl-beta-D-glucosaminyltransferase</fullName>
        <ecNumber evidence="2">2.4.1.206</ecNumber>
    </recommendedName>
    <alternativeName>
        <fullName>Lactotriaosylceramide synthase</fullName>
        <shortName>Lc(3)Cer synthase</shortName>
        <shortName>Lc3 synthase</shortName>
    </alternativeName>
    <alternativeName>
        <fullName>UDP-GlcNAc:beta-Gal beta-1,3-N-acetylglucosaminyltransferase 5</fullName>
        <shortName>BGnT-5</shortName>
        <shortName>Beta-1,3-Gn-T5</shortName>
        <shortName>Beta-1,3-N-acetylglucosaminyltransferase 5</shortName>
        <shortName>Beta3Gn-T5</shortName>
    </alternativeName>
</protein>
<evidence type="ECO:0000250" key="1"/>
<evidence type="ECO:0000250" key="2">
    <source>
        <dbReference type="UniProtKB" id="Q8BGY6"/>
    </source>
</evidence>
<evidence type="ECO:0000250" key="3">
    <source>
        <dbReference type="UniProtKB" id="Q9BYG0"/>
    </source>
</evidence>
<evidence type="ECO:0000255" key="4"/>
<evidence type="ECO:0000305" key="5"/>
<organism>
    <name type="scientific">Xenopus tropicalis</name>
    <name type="common">Western clawed frog</name>
    <name type="synonym">Silurana tropicalis</name>
    <dbReference type="NCBI Taxonomy" id="8364"/>
    <lineage>
        <taxon>Eukaryota</taxon>
        <taxon>Metazoa</taxon>
        <taxon>Chordata</taxon>
        <taxon>Craniata</taxon>
        <taxon>Vertebrata</taxon>
        <taxon>Euteleostomi</taxon>
        <taxon>Amphibia</taxon>
        <taxon>Batrachia</taxon>
        <taxon>Anura</taxon>
        <taxon>Pipoidea</taxon>
        <taxon>Pipidae</taxon>
        <taxon>Xenopodinae</taxon>
        <taxon>Xenopus</taxon>
        <taxon>Silurana</taxon>
    </lineage>
</organism>
<proteinExistence type="evidence at transcript level"/>
<dbReference type="EC" id="2.4.1.206" evidence="2"/>
<dbReference type="EMBL" id="CR848570">
    <property type="protein sequence ID" value="CAL49301.1"/>
    <property type="status" value="ALT_INIT"/>
    <property type="molecule type" value="mRNA"/>
</dbReference>
<dbReference type="EMBL" id="BC063912">
    <property type="protein sequence ID" value="AAH63912.1"/>
    <property type="molecule type" value="mRNA"/>
</dbReference>
<dbReference type="EMBL" id="BC080164">
    <property type="protein sequence ID" value="AAH80164.1"/>
    <property type="molecule type" value="mRNA"/>
</dbReference>
<dbReference type="RefSeq" id="NP_989240.1">
    <property type="nucleotide sequence ID" value="NM_203909.1"/>
</dbReference>
<dbReference type="RefSeq" id="XP_017949312.1">
    <property type="nucleotide sequence ID" value="XM_018093823.1"/>
</dbReference>
<dbReference type="RefSeq" id="XP_017949313.1">
    <property type="nucleotide sequence ID" value="XM_018093824.1"/>
</dbReference>
<dbReference type="SMR" id="Q6P3P5"/>
<dbReference type="FunCoup" id="Q6P3P5">
    <property type="interactions" value="437"/>
</dbReference>
<dbReference type="STRING" id="8364.ENSXETP00000041003"/>
<dbReference type="CAZy" id="GT31">
    <property type="family name" value="Glycosyltransferase Family 31"/>
</dbReference>
<dbReference type="GlyCosmos" id="Q6P3P5">
    <property type="glycosylation" value="3 sites, No reported glycans"/>
</dbReference>
<dbReference type="PaxDb" id="8364-ENSXETP00000055015"/>
<dbReference type="DNASU" id="394849"/>
<dbReference type="GeneID" id="394849"/>
<dbReference type="KEGG" id="xtr:394849"/>
<dbReference type="AGR" id="Xenbase:XB-GENE-955708"/>
<dbReference type="CTD" id="84002"/>
<dbReference type="Xenbase" id="XB-GENE-955708">
    <property type="gene designation" value="b3gnt5"/>
</dbReference>
<dbReference type="eggNOG" id="KOG2287">
    <property type="taxonomic scope" value="Eukaryota"/>
</dbReference>
<dbReference type="HOGENOM" id="CLU_036849_2_4_1"/>
<dbReference type="InParanoid" id="Q6P3P5"/>
<dbReference type="OMA" id="VQLFATC"/>
<dbReference type="OrthoDB" id="115198at2759"/>
<dbReference type="PhylomeDB" id="Q6P3P5"/>
<dbReference type="TreeFam" id="TF318639"/>
<dbReference type="Reactome" id="R-XTR-913709">
    <property type="pathway name" value="O-linked glycosylation of mucins"/>
</dbReference>
<dbReference type="Reactome" id="R-XTR-9840309">
    <property type="pathway name" value="Glycosphingolipid biosynthesis"/>
</dbReference>
<dbReference type="UniPathway" id="UPA00378"/>
<dbReference type="Proteomes" id="UP000008143">
    <property type="component" value="Chromosome 5"/>
</dbReference>
<dbReference type="Bgee" id="ENSXETG00000025974">
    <property type="expression patterns" value="Expressed in egg cell and 15 other cell types or tissues"/>
</dbReference>
<dbReference type="GO" id="GO:0000139">
    <property type="term" value="C:Golgi membrane"/>
    <property type="evidence" value="ECO:0007669"/>
    <property type="project" value="UniProtKB-SubCell"/>
</dbReference>
<dbReference type="GO" id="GO:0047256">
    <property type="term" value="F:lactosylceramide 1,3-N-acetyl-beta-D-glucosaminyltransferase activity"/>
    <property type="evidence" value="ECO:0007669"/>
    <property type="project" value="UniProtKB-EC"/>
</dbReference>
<dbReference type="GO" id="GO:0006629">
    <property type="term" value="P:lipid metabolic process"/>
    <property type="evidence" value="ECO:0007669"/>
    <property type="project" value="UniProtKB-KW"/>
</dbReference>
<dbReference type="GO" id="GO:0006486">
    <property type="term" value="P:protein glycosylation"/>
    <property type="evidence" value="ECO:0007669"/>
    <property type="project" value="UniProtKB-UniPathway"/>
</dbReference>
<dbReference type="FunFam" id="3.90.550.50:FF:000019">
    <property type="entry name" value="Hexosyltransferase"/>
    <property type="match status" value="1"/>
</dbReference>
<dbReference type="Gene3D" id="3.90.550.50">
    <property type="match status" value="1"/>
</dbReference>
<dbReference type="InterPro" id="IPR002659">
    <property type="entry name" value="Glyco_trans_31"/>
</dbReference>
<dbReference type="PANTHER" id="PTHR11214">
    <property type="entry name" value="BETA-1,3-N-ACETYLGLUCOSAMINYLTRANSFERASE"/>
    <property type="match status" value="1"/>
</dbReference>
<dbReference type="PANTHER" id="PTHR11214:SF21">
    <property type="entry name" value="LACTOSYLCERAMIDE 1,3-N-ACETYL-BETA-D-GLUCOSAMINYLTRANSFERASE"/>
    <property type="match status" value="1"/>
</dbReference>
<dbReference type="Pfam" id="PF01762">
    <property type="entry name" value="Galactosyl_T"/>
    <property type="match status" value="1"/>
</dbReference>
<feature type="chain" id="PRO_0000289217" description="Lactosylceramide 1,3-N-acetyl-beta-D-glucosaminyltransferase">
    <location>
        <begin position="1"/>
        <end position="377"/>
    </location>
</feature>
<feature type="topological domain" description="Cytoplasmic" evidence="4">
    <location>
        <begin position="1"/>
        <end position="12"/>
    </location>
</feature>
<feature type="transmembrane region" description="Helical; Signal-anchor for type II membrane protein" evidence="4">
    <location>
        <begin position="13"/>
        <end position="30"/>
    </location>
</feature>
<feature type="topological domain" description="Lumenal" evidence="4">
    <location>
        <begin position="31"/>
        <end position="377"/>
    </location>
</feature>
<feature type="glycosylation site" description="N-linked (GlcNAc...) asparagine" evidence="4">
    <location>
        <position position="56"/>
    </location>
</feature>
<feature type="glycosylation site" description="N-linked (GlcNAc...) asparagine" evidence="4">
    <location>
        <position position="167"/>
    </location>
</feature>
<feature type="glycosylation site" description="N-linked (GlcNAc...) asparagine" evidence="4">
    <location>
        <position position="275"/>
    </location>
</feature>
<reference key="1">
    <citation type="submission" date="2006-10" db="EMBL/GenBank/DDBJ databases">
        <authorList>
            <consortium name="Sanger Xenopus tropicalis EST/cDNA project"/>
        </authorList>
    </citation>
    <scope>NUCLEOTIDE SEQUENCE [LARGE SCALE MRNA]</scope>
    <source>
        <tissue>Egg</tissue>
    </source>
</reference>
<reference key="2">
    <citation type="submission" date="2003-12" db="EMBL/GenBank/DDBJ databases">
        <authorList>
            <consortium name="NIH - Xenopus Gene Collection (XGC) project"/>
        </authorList>
    </citation>
    <scope>NUCLEOTIDE SEQUENCE [LARGE SCALE MRNA]</scope>
    <source>
        <tissue>Embryo</tissue>
    </source>
</reference>